<proteinExistence type="predicted"/>
<protein>
    <recommendedName>
        <fullName>Uncharacterized protein YqiB</fullName>
    </recommendedName>
</protein>
<sequence length="140" mass="16548">MKRYTPDFPEMMRLCEMNFSQLRRLLPRNDAPGETVSYQVANAQYRLTIVESTRYTTLVTIEQTAPAISYWSLPSMTVRLYHDAMVAEVCSSQQIFRFKARYDYPNKKLHQRDEKHQINQFLADWLRYCLAHGAMAIPVY</sequence>
<keyword id="KW-1185">Reference proteome</keyword>
<accession>P0ADU9</accession>
<accession>P36652</accession>
<organism>
    <name type="scientific">Escherichia coli O157:H7</name>
    <dbReference type="NCBI Taxonomy" id="83334"/>
    <lineage>
        <taxon>Bacteria</taxon>
        <taxon>Pseudomonadati</taxon>
        <taxon>Pseudomonadota</taxon>
        <taxon>Gammaproteobacteria</taxon>
        <taxon>Enterobacterales</taxon>
        <taxon>Enterobacteriaceae</taxon>
        <taxon>Escherichia</taxon>
    </lineage>
</organism>
<dbReference type="EMBL" id="AE005174">
    <property type="protein sequence ID" value="AAG58172.1"/>
    <property type="molecule type" value="Genomic_DNA"/>
</dbReference>
<dbReference type="EMBL" id="BA000007">
    <property type="protein sequence ID" value="BAB37344.1"/>
    <property type="molecule type" value="Genomic_DNA"/>
</dbReference>
<dbReference type="PIR" id="A98119">
    <property type="entry name" value="A98119"/>
</dbReference>
<dbReference type="PIR" id="H85963">
    <property type="entry name" value="H85963"/>
</dbReference>
<dbReference type="RefSeq" id="NP_311948.1">
    <property type="nucleotide sequence ID" value="NC_002695.1"/>
</dbReference>
<dbReference type="RefSeq" id="WP_000833393.1">
    <property type="nucleotide sequence ID" value="NZ_VOAI01000009.1"/>
</dbReference>
<dbReference type="STRING" id="155864.Z4390"/>
<dbReference type="GeneID" id="916253"/>
<dbReference type="KEGG" id="ece:Z4390"/>
<dbReference type="KEGG" id="ecs:ECs_3921"/>
<dbReference type="PATRIC" id="fig|386585.9.peg.4089"/>
<dbReference type="eggNOG" id="COG3151">
    <property type="taxonomic scope" value="Bacteria"/>
</dbReference>
<dbReference type="HOGENOM" id="CLU_116657_1_1_6"/>
<dbReference type="OMA" id="NAAMHQP"/>
<dbReference type="Proteomes" id="UP000000558">
    <property type="component" value="Chromosome"/>
</dbReference>
<dbReference type="Proteomes" id="UP000002519">
    <property type="component" value="Chromosome"/>
</dbReference>
<dbReference type="InterPro" id="IPR009659">
    <property type="entry name" value="DUF1249"/>
</dbReference>
<dbReference type="NCBIfam" id="NF008267">
    <property type="entry name" value="PRK11039.1"/>
    <property type="match status" value="1"/>
</dbReference>
<dbReference type="PANTHER" id="PTHR38774:SF1">
    <property type="entry name" value="CYTOPLASMIC PROTEIN"/>
    <property type="match status" value="1"/>
</dbReference>
<dbReference type="PANTHER" id="PTHR38774">
    <property type="entry name" value="CYTOPLASMIC PROTEIN-RELATED"/>
    <property type="match status" value="1"/>
</dbReference>
<dbReference type="Pfam" id="PF06853">
    <property type="entry name" value="DUF1249"/>
    <property type="match status" value="1"/>
</dbReference>
<name>YQIB_ECO57</name>
<reference key="1">
    <citation type="journal article" date="2001" name="Nature">
        <title>Genome sequence of enterohaemorrhagic Escherichia coli O157:H7.</title>
        <authorList>
            <person name="Perna N.T."/>
            <person name="Plunkett G. III"/>
            <person name="Burland V."/>
            <person name="Mau B."/>
            <person name="Glasner J.D."/>
            <person name="Rose D.J."/>
            <person name="Mayhew G.F."/>
            <person name="Evans P.S."/>
            <person name="Gregor J."/>
            <person name="Kirkpatrick H.A."/>
            <person name="Posfai G."/>
            <person name="Hackett J."/>
            <person name="Klink S."/>
            <person name="Boutin A."/>
            <person name="Shao Y."/>
            <person name="Miller L."/>
            <person name="Grotbeck E.J."/>
            <person name="Davis N.W."/>
            <person name="Lim A."/>
            <person name="Dimalanta E.T."/>
            <person name="Potamousis K."/>
            <person name="Apodaca J."/>
            <person name="Anantharaman T.S."/>
            <person name="Lin J."/>
            <person name="Yen G."/>
            <person name="Schwartz D.C."/>
            <person name="Welch R.A."/>
            <person name="Blattner F.R."/>
        </authorList>
    </citation>
    <scope>NUCLEOTIDE SEQUENCE [LARGE SCALE GENOMIC DNA]</scope>
    <source>
        <strain>O157:H7 / EDL933 / ATCC 700927 / EHEC</strain>
    </source>
</reference>
<reference key="2">
    <citation type="journal article" date="2001" name="DNA Res.">
        <title>Complete genome sequence of enterohemorrhagic Escherichia coli O157:H7 and genomic comparison with a laboratory strain K-12.</title>
        <authorList>
            <person name="Hayashi T."/>
            <person name="Makino K."/>
            <person name="Ohnishi M."/>
            <person name="Kurokawa K."/>
            <person name="Ishii K."/>
            <person name="Yokoyama K."/>
            <person name="Han C.-G."/>
            <person name="Ohtsubo E."/>
            <person name="Nakayama K."/>
            <person name="Murata T."/>
            <person name="Tanaka M."/>
            <person name="Tobe T."/>
            <person name="Iida T."/>
            <person name="Takami H."/>
            <person name="Honda T."/>
            <person name="Sasakawa C."/>
            <person name="Ogasawara N."/>
            <person name="Yasunaga T."/>
            <person name="Kuhara S."/>
            <person name="Shiba T."/>
            <person name="Hattori M."/>
            <person name="Shinagawa H."/>
        </authorList>
    </citation>
    <scope>NUCLEOTIDE SEQUENCE [LARGE SCALE GENOMIC DNA]</scope>
    <source>
        <strain>O157:H7 / Sakai / RIMD 0509952 / EHEC</strain>
    </source>
</reference>
<gene>
    <name type="primary">yqiB</name>
    <name type="ordered locus">Z4390</name>
    <name type="ordered locus">ECs3921</name>
</gene>
<feature type="chain" id="PRO_0000169414" description="Uncharacterized protein YqiB">
    <location>
        <begin position="1"/>
        <end position="140"/>
    </location>
</feature>